<organism>
    <name type="scientific">African swine fever virus (isolate Tick/Malawi/Lil 20-1/1983)</name>
    <name type="common">ASFV</name>
    <dbReference type="NCBI Taxonomy" id="10500"/>
    <lineage>
        <taxon>Viruses</taxon>
        <taxon>Varidnaviria</taxon>
        <taxon>Bamfordvirae</taxon>
        <taxon>Nucleocytoviricota</taxon>
        <taxon>Pokkesviricetes</taxon>
        <taxon>Asfuvirales</taxon>
        <taxon>Asfarviridae</taxon>
        <taxon>Asfivirus</taxon>
        <taxon>African swine fever virus</taxon>
    </lineage>
</organism>
<protein>
    <recommendedName>
        <fullName>Protein MGF 300-3L</fullName>
    </recommendedName>
</protein>
<feature type="chain" id="PRO_0000373238" description="Protein MGF 300-3L">
    <location>
        <begin position="1"/>
        <end position="104"/>
    </location>
</feature>
<comment type="function">
    <text evidence="1">Plays a role in virus cell tropism, and may be required for efficient virus replication in macrophages.</text>
</comment>
<comment type="similarity">
    <text evidence="2">Belongs to the asfivirus MGF 300 family.</text>
</comment>
<gene>
    <name type="ordered locus">Mal-025</name>
</gene>
<sequence length="104" mass="12383">MKNFFYKGNKKIQQRMLNYGMEWAATHGKVRTFICCYTLGGTASLKLYQKAYQNEKFMIMALCSYLGNIQINNPWESLNPYTMVQNKEKFLPLKFSEETQYFYI</sequence>
<name>3003L_ASFM2</name>
<evidence type="ECO:0000250" key="1"/>
<evidence type="ECO:0000305" key="2"/>
<proteinExistence type="inferred from homology"/>
<accession>P0C9L3</accession>
<organismHost>
    <name type="scientific">Ornithodoros</name>
    <name type="common">relapsing fever ticks</name>
    <dbReference type="NCBI Taxonomy" id="6937"/>
</organismHost>
<organismHost>
    <name type="scientific">Phacochoerus aethiopicus</name>
    <name type="common">Warthog</name>
    <dbReference type="NCBI Taxonomy" id="85517"/>
</organismHost>
<organismHost>
    <name type="scientific">Phacochoerus africanus</name>
    <name type="common">Warthog</name>
    <dbReference type="NCBI Taxonomy" id="41426"/>
</organismHost>
<organismHost>
    <name type="scientific">Potamochoerus larvatus</name>
    <name type="common">Bushpig</name>
    <dbReference type="NCBI Taxonomy" id="273792"/>
</organismHost>
<organismHost>
    <name type="scientific">Sus scrofa</name>
    <name type="common">Pig</name>
    <dbReference type="NCBI Taxonomy" id="9823"/>
</organismHost>
<reference key="1">
    <citation type="submission" date="2003-03" db="EMBL/GenBank/DDBJ databases">
        <title>African swine fever virus genomes.</title>
        <authorList>
            <person name="Kutish G.F."/>
            <person name="Rock D.L."/>
        </authorList>
    </citation>
    <scope>NUCLEOTIDE SEQUENCE [LARGE SCALE GENOMIC DNA]</scope>
</reference>
<dbReference type="EMBL" id="AY261361">
    <property type="status" value="NOT_ANNOTATED_CDS"/>
    <property type="molecule type" value="Genomic_DNA"/>
</dbReference>
<dbReference type="Proteomes" id="UP000000860">
    <property type="component" value="Segment"/>
</dbReference>